<protein>
    <recommendedName>
        <fullName evidence="1">Crossover junction endodeoxyribonuclease RuvC</fullName>
        <ecNumber evidence="1">3.1.21.10</ecNumber>
    </recommendedName>
    <alternativeName>
        <fullName evidence="1">Holliday junction nuclease RuvC</fullName>
    </alternativeName>
    <alternativeName>
        <fullName evidence="1">Holliday junction resolvase RuvC</fullName>
    </alternativeName>
</protein>
<accession>A3M4U7</accession>
<feature type="chain" id="PRO_1000090496" description="Crossover junction endodeoxyribonuclease RuvC">
    <location>
        <begin position="1"/>
        <end position="181"/>
    </location>
</feature>
<feature type="active site" evidence="1">
    <location>
        <position position="8"/>
    </location>
</feature>
<feature type="active site" evidence="1">
    <location>
        <position position="67"/>
    </location>
</feature>
<feature type="active site" evidence="1">
    <location>
        <position position="139"/>
    </location>
</feature>
<feature type="binding site" evidence="1">
    <location>
        <position position="8"/>
    </location>
    <ligand>
        <name>Mg(2+)</name>
        <dbReference type="ChEBI" id="CHEBI:18420"/>
        <label>1</label>
    </ligand>
</feature>
<feature type="binding site" evidence="1">
    <location>
        <position position="67"/>
    </location>
    <ligand>
        <name>Mg(2+)</name>
        <dbReference type="ChEBI" id="CHEBI:18420"/>
        <label>2</label>
    </ligand>
</feature>
<feature type="binding site" evidence="1">
    <location>
        <position position="139"/>
    </location>
    <ligand>
        <name>Mg(2+)</name>
        <dbReference type="ChEBI" id="CHEBI:18420"/>
        <label>1</label>
    </ligand>
</feature>
<reference key="1">
    <citation type="journal article" date="2007" name="Genes Dev.">
        <title>New insights into Acinetobacter baumannii pathogenesis revealed by high-density pyrosequencing and transposon mutagenesis.</title>
        <authorList>
            <person name="Smith M.G."/>
            <person name="Gianoulis T.A."/>
            <person name="Pukatzki S."/>
            <person name="Mekalanos J.J."/>
            <person name="Ornston L.N."/>
            <person name="Gerstein M."/>
            <person name="Snyder M."/>
        </authorList>
    </citation>
    <scope>NUCLEOTIDE SEQUENCE [LARGE SCALE GENOMIC DNA]</scope>
    <source>
        <strain>ATCC 17978 / DSM 105126 / CIP 53.77 / LMG 1025 / NCDC KC755 / 5377</strain>
    </source>
</reference>
<evidence type="ECO:0000255" key="1">
    <source>
        <dbReference type="HAMAP-Rule" id="MF_00034"/>
    </source>
</evidence>
<sequence length="181" mass="19446">MPLIIGIDPGSRLTGYGIIEKDGSKLRFVDAGTIRTETQEMPERLKRIFAGVERIVKFHGPTEAAVEQVFMAQNPDSALKLGQARGAAIAALVNLDLQVAEYTARQIKQSVVGYGAADKEQVQMMVMRLLNLTIKPQADAADALAAAICHAHASGSMSKLTVLNALGGMARGRSRSSSRRR</sequence>
<organism>
    <name type="scientific">Acinetobacter baumannii (strain ATCC 17978 / DSM 105126 / CIP 53.77 / LMG 1025 / NCDC KC755 / 5377)</name>
    <dbReference type="NCBI Taxonomy" id="400667"/>
    <lineage>
        <taxon>Bacteria</taxon>
        <taxon>Pseudomonadati</taxon>
        <taxon>Pseudomonadota</taxon>
        <taxon>Gammaproteobacteria</taxon>
        <taxon>Moraxellales</taxon>
        <taxon>Moraxellaceae</taxon>
        <taxon>Acinetobacter</taxon>
        <taxon>Acinetobacter calcoaceticus/baumannii complex</taxon>
    </lineage>
</organism>
<dbReference type="EC" id="3.1.21.10" evidence="1"/>
<dbReference type="EMBL" id="CP000521">
    <property type="protein sequence ID" value="ABO11941.2"/>
    <property type="molecule type" value="Genomic_DNA"/>
</dbReference>
<dbReference type="RefSeq" id="WP_001128330.1">
    <property type="nucleotide sequence ID" value="NZ_CP053098.1"/>
</dbReference>
<dbReference type="SMR" id="A3M4U7"/>
<dbReference type="GeneID" id="92893740"/>
<dbReference type="KEGG" id="acb:A1S_1514"/>
<dbReference type="HOGENOM" id="CLU_091257_2_1_6"/>
<dbReference type="GO" id="GO:0005737">
    <property type="term" value="C:cytoplasm"/>
    <property type="evidence" value="ECO:0007669"/>
    <property type="project" value="UniProtKB-SubCell"/>
</dbReference>
<dbReference type="GO" id="GO:0048476">
    <property type="term" value="C:Holliday junction resolvase complex"/>
    <property type="evidence" value="ECO:0007669"/>
    <property type="project" value="UniProtKB-UniRule"/>
</dbReference>
<dbReference type="GO" id="GO:0008821">
    <property type="term" value="F:crossover junction DNA endonuclease activity"/>
    <property type="evidence" value="ECO:0007669"/>
    <property type="project" value="UniProtKB-UniRule"/>
</dbReference>
<dbReference type="GO" id="GO:0003677">
    <property type="term" value="F:DNA binding"/>
    <property type="evidence" value="ECO:0007669"/>
    <property type="project" value="UniProtKB-KW"/>
</dbReference>
<dbReference type="GO" id="GO:0000287">
    <property type="term" value="F:magnesium ion binding"/>
    <property type="evidence" value="ECO:0007669"/>
    <property type="project" value="UniProtKB-UniRule"/>
</dbReference>
<dbReference type="GO" id="GO:0006310">
    <property type="term" value="P:DNA recombination"/>
    <property type="evidence" value="ECO:0007669"/>
    <property type="project" value="UniProtKB-UniRule"/>
</dbReference>
<dbReference type="GO" id="GO:0006281">
    <property type="term" value="P:DNA repair"/>
    <property type="evidence" value="ECO:0007669"/>
    <property type="project" value="UniProtKB-UniRule"/>
</dbReference>
<dbReference type="CDD" id="cd16962">
    <property type="entry name" value="RuvC"/>
    <property type="match status" value="1"/>
</dbReference>
<dbReference type="FunFam" id="3.30.420.10:FF:000002">
    <property type="entry name" value="Crossover junction endodeoxyribonuclease RuvC"/>
    <property type="match status" value="1"/>
</dbReference>
<dbReference type="Gene3D" id="3.30.420.10">
    <property type="entry name" value="Ribonuclease H-like superfamily/Ribonuclease H"/>
    <property type="match status" value="1"/>
</dbReference>
<dbReference type="HAMAP" id="MF_00034">
    <property type="entry name" value="RuvC"/>
    <property type="match status" value="1"/>
</dbReference>
<dbReference type="InterPro" id="IPR012337">
    <property type="entry name" value="RNaseH-like_sf"/>
</dbReference>
<dbReference type="InterPro" id="IPR036397">
    <property type="entry name" value="RNaseH_sf"/>
</dbReference>
<dbReference type="InterPro" id="IPR020563">
    <property type="entry name" value="X-over_junc_endoDNase_Mg_BS"/>
</dbReference>
<dbReference type="InterPro" id="IPR002176">
    <property type="entry name" value="X-over_junc_endoDNase_RuvC"/>
</dbReference>
<dbReference type="NCBIfam" id="TIGR00228">
    <property type="entry name" value="ruvC"/>
    <property type="match status" value="1"/>
</dbReference>
<dbReference type="PANTHER" id="PTHR30194">
    <property type="entry name" value="CROSSOVER JUNCTION ENDODEOXYRIBONUCLEASE RUVC"/>
    <property type="match status" value="1"/>
</dbReference>
<dbReference type="PANTHER" id="PTHR30194:SF3">
    <property type="entry name" value="CROSSOVER JUNCTION ENDODEOXYRIBONUCLEASE RUVC"/>
    <property type="match status" value="1"/>
</dbReference>
<dbReference type="Pfam" id="PF02075">
    <property type="entry name" value="RuvC"/>
    <property type="match status" value="1"/>
</dbReference>
<dbReference type="PRINTS" id="PR00696">
    <property type="entry name" value="RSOLVASERUVC"/>
</dbReference>
<dbReference type="SUPFAM" id="SSF53098">
    <property type="entry name" value="Ribonuclease H-like"/>
    <property type="match status" value="1"/>
</dbReference>
<dbReference type="PROSITE" id="PS01321">
    <property type="entry name" value="RUVC"/>
    <property type="match status" value="1"/>
</dbReference>
<comment type="function">
    <text evidence="1">The RuvA-RuvB-RuvC complex processes Holliday junction (HJ) DNA during genetic recombination and DNA repair. Endonuclease that resolves HJ intermediates. Cleaves cruciform DNA by making single-stranded nicks across the HJ at symmetrical positions within the homologous arms, yielding a 5'-phosphate and a 3'-hydroxyl group; requires a central core of homology in the junction. The consensus cleavage sequence is 5'-(A/T)TT(C/G)-3'. Cleavage occurs on the 3'-side of the TT dinucleotide at the point of strand exchange. HJ branch migration catalyzed by RuvA-RuvB allows RuvC to scan DNA until it finds its consensus sequence, where it cleaves and resolves the cruciform DNA.</text>
</comment>
<comment type="catalytic activity">
    <reaction evidence="1">
        <text>Endonucleolytic cleavage at a junction such as a reciprocal single-stranded crossover between two homologous DNA duplexes (Holliday junction).</text>
        <dbReference type="EC" id="3.1.21.10"/>
    </reaction>
</comment>
<comment type="cofactor">
    <cofactor evidence="1">
        <name>Mg(2+)</name>
        <dbReference type="ChEBI" id="CHEBI:18420"/>
    </cofactor>
    <text evidence="1">Binds 2 Mg(2+) ion per subunit.</text>
</comment>
<comment type="subunit">
    <text evidence="1">Homodimer which binds Holliday junction (HJ) DNA. The HJ becomes 2-fold symmetrical on binding to RuvC with unstacked arms; it has a different conformation from HJ DNA in complex with RuvA. In the full resolvosome a probable DNA-RuvA(4)-RuvB(12)-RuvC(2) complex forms which resolves the HJ.</text>
</comment>
<comment type="subcellular location">
    <subcellularLocation>
        <location evidence="1">Cytoplasm</location>
    </subcellularLocation>
</comment>
<comment type="similarity">
    <text evidence="1">Belongs to the RuvC family.</text>
</comment>
<gene>
    <name evidence="1" type="primary">ruvC</name>
    <name type="ordered locus">A1S_1514</name>
</gene>
<keyword id="KW-0963">Cytoplasm</keyword>
<keyword id="KW-0227">DNA damage</keyword>
<keyword id="KW-0233">DNA recombination</keyword>
<keyword id="KW-0234">DNA repair</keyword>
<keyword id="KW-0238">DNA-binding</keyword>
<keyword id="KW-0255">Endonuclease</keyword>
<keyword id="KW-0378">Hydrolase</keyword>
<keyword id="KW-0460">Magnesium</keyword>
<keyword id="KW-0479">Metal-binding</keyword>
<keyword id="KW-0540">Nuclease</keyword>
<proteinExistence type="inferred from homology"/>
<name>RUVC_ACIBT</name>